<sequence length="285" mass="32509">MLFVLILSHRAASYGAIMAALPYMQLYIADYLADTMHLSAEEHGAYLLLMFNYWQTGKPIPKNRLAKIARLTNERWADVEPSLQEFFCDNGEEWVHLRIEEDLASVREKLTKKSAAGKASVQARRSRKEADVQTKQERNLTGVQTDVEVVFEHDVNTKATNKDTDKDLKTDPPLNPPRGNRGVKKFDPLDITLPNWISVSLWREWVEFRQALRKPIRTEQGANGAIRELEKFRQQGFSPEQVIRHSIANEYQGLFAPKGVRPETLLRQVNTVSLPDSAIPPGFRG</sequence>
<feature type="chain" id="PRO_0000168911" description="Uncharacterized protein YdaU">
    <location>
        <begin position="1"/>
        <end position="285"/>
    </location>
</feature>
<feature type="region of interest" description="Disordered" evidence="1">
    <location>
        <begin position="115"/>
        <end position="139"/>
    </location>
</feature>
<feature type="region of interest" description="Disordered" evidence="1">
    <location>
        <begin position="152"/>
        <end position="183"/>
    </location>
</feature>
<feature type="compositionally biased region" description="Basic and acidic residues" evidence="1">
    <location>
        <begin position="128"/>
        <end position="138"/>
    </location>
</feature>
<feature type="compositionally biased region" description="Basic and acidic residues" evidence="1">
    <location>
        <begin position="152"/>
        <end position="170"/>
    </location>
</feature>
<reference key="1">
    <citation type="journal article" date="1997" name="Science">
        <title>The complete genome sequence of Escherichia coli K-12.</title>
        <authorList>
            <person name="Blattner F.R."/>
            <person name="Plunkett G. III"/>
            <person name="Bloch C.A."/>
            <person name="Perna N.T."/>
            <person name="Burland V."/>
            <person name="Riley M."/>
            <person name="Collado-Vides J."/>
            <person name="Glasner J.D."/>
            <person name="Rode C.K."/>
            <person name="Mayhew G.F."/>
            <person name="Gregor J."/>
            <person name="Davis N.W."/>
            <person name="Kirkpatrick H.A."/>
            <person name="Goeden M.A."/>
            <person name="Rose D.J."/>
            <person name="Mau B."/>
            <person name="Shao Y."/>
        </authorList>
    </citation>
    <scope>NUCLEOTIDE SEQUENCE [LARGE SCALE GENOMIC DNA]</scope>
    <source>
        <strain>K12 / MG1655 / ATCC 47076</strain>
    </source>
</reference>
<reference key="2">
    <citation type="journal article" date="2006" name="Mol. Syst. Biol.">
        <title>Highly accurate genome sequences of Escherichia coli K-12 strains MG1655 and W3110.</title>
        <authorList>
            <person name="Hayashi K."/>
            <person name="Morooka N."/>
            <person name="Yamamoto Y."/>
            <person name="Fujita K."/>
            <person name="Isono K."/>
            <person name="Choi S."/>
            <person name="Ohtsubo E."/>
            <person name="Baba T."/>
            <person name="Wanner B.L."/>
            <person name="Mori H."/>
            <person name="Horiuchi T."/>
        </authorList>
    </citation>
    <scope>NUCLEOTIDE SEQUENCE [LARGE SCALE GENOMIC DNA]</scope>
    <source>
        <strain>K12 / W3110 / ATCC 27325 / DSM 5911</strain>
    </source>
</reference>
<name>YDAU_ECOLI</name>
<evidence type="ECO:0000256" key="1">
    <source>
        <dbReference type="SAM" id="MobiDB-lite"/>
    </source>
</evidence>
<keyword id="KW-1185">Reference proteome</keyword>
<protein>
    <recommendedName>
        <fullName>Uncharacterized protein YdaU</fullName>
    </recommendedName>
</protein>
<accession>P76065</accession>
<accession>Q2MBE2</accession>
<organism>
    <name type="scientific">Escherichia coli (strain K12)</name>
    <dbReference type="NCBI Taxonomy" id="83333"/>
    <lineage>
        <taxon>Bacteria</taxon>
        <taxon>Pseudomonadati</taxon>
        <taxon>Pseudomonadota</taxon>
        <taxon>Gammaproteobacteria</taxon>
        <taxon>Enterobacterales</taxon>
        <taxon>Enterobacteriaceae</taxon>
        <taxon>Escherichia</taxon>
    </lineage>
</organism>
<proteinExistence type="predicted"/>
<dbReference type="EMBL" id="U00096">
    <property type="protein sequence ID" value="AAC74441.1"/>
    <property type="molecule type" value="Genomic_DNA"/>
</dbReference>
<dbReference type="EMBL" id="AP009048">
    <property type="protein sequence ID" value="BAE76414.1"/>
    <property type="molecule type" value="Genomic_DNA"/>
</dbReference>
<dbReference type="PIR" id="B64886">
    <property type="entry name" value="B64886"/>
</dbReference>
<dbReference type="RefSeq" id="NP_415877.1">
    <property type="nucleotide sequence ID" value="NC_000913.3"/>
</dbReference>
<dbReference type="RefSeq" id="WP_000899748.1">
    <property type="nucleotide sequence ID" value="NZ_JACEFS010000049.1"/>
</dbReference>
<dbReference type="SMR" id="P76065"/>
<dbReference type="BioGRID" id="4263250">
    <property type="interactions" value="115"/>
</dbReference>
<dbReference type="DIP" id="DIP-11628N"/>
<dbReference type="FunCoup" id="P76065">
    <property type="interactions" value="29"/>
</dbReference>
<dbReference type="STRING" id="511145.b1359"/>
<dbReference type="PaxDb" id="511145-b1359"/>
<dbReference type="DNASU" id="945925"/>
<dbReference type="EnsemblBacteria" id="AAC74441">
    <property type="protein sequence ID" value="AAC74441"/>
    <property type="gene ID" value="b1359"/>
</dbReference>
<dbReference type="GeneID" id="945925"/>
<dbReference type="KEGG" id="ecj:JW1354"/>
<dbReference type="KEGG" id="eco:b1359"/>
<dbReference type="KEGG" id="ecoc:C3026_07950"/>
<dbReference type="PATRIC" id="fig|511145.12.peg.1418"/>
<dbReference type="EchoBASE" id="EB3146"/>
<dbReference type="eggNOG" id="COG3756">
    <property type="taxonomic scope" value="Bacteria"/>
</dbReference>
<dbReference type="HOGENOM" id="CLU_052481_0_0_6"/>
<dbReference type="InParanoid" id="P76065"/>
<dbReference type="OMA" id="FRINTRA"/>
<dbReference type="OrthoDB" id="6313655at2"/>
<dbReference type="BioCyc" id="EcoCyc:G6683-MONOMER"/>
<dbReference type="PRO" id="PR:P76065"/>
<dbReference type="Proteomes" id="UP000000625">
    <property type="component" value="Chromosome"/>
</dbReference>
<dbReference type="InterPro" id="IPR010781">
    <property type="entry name" value="DUF1376"/>
</dbReference>
<dbReference type="Pfam" id="PF07120">
    <property type="entry name" value="DUF1376"/>
    <property type="match status" value="1"/>
</dbReference>
<gene>
    <name type="primary">ydaU</name>
    <name type="ordered locus">b1359</name>
    <name type="ordered locus">JW1354</name>
</gene>